<reference key="1">
    <citation type="submission" date="2009-07" db="EMBL/GenBank/DDBJ databases">
        <title>Complete sequence of Pectobacterium carotovorum subsp. carotovorum PC1.</title>
        <authorList>
            <consortium name="US DOE Joint Genome Institute"/>
            <person name="Lucas S."/>
            <person name="Copeland A."/>
            <person name="Lapidus A."/>
            <person name="Glavina del Rio T."/>
            <person name="Tice H."/>
            <person name="Bruce D."/>
            <person name="Goodwin L."/>
            <person name="Pitluck S."/>
            <person name="Munk A.C."/>
            <person name="Brettin T."/>
            <person name="Detter J.C."/>
            <person name="Han C."/>
            <person name="Tapia R."/>
            <person name="Larimer F."/>
            <person name="Land M."/>
            <person name="Hauser L."/>
            <person name="Kyrpides N."/>
            <person name="Mikhailova N."/>
            <person name="Balakrishnan V."/>
            <person name="Glasner J."/>
            <person name="Perna N.T."/>
        </authorList>
    </citation>
    <scope>NUCLEOTIDE SEQUENCE [LARGE SCALE GENOMIC DNA]</scope>
    <source>
        <strain>PC1</strain>
    </source>
</reference>
<proteinExistence type="inferred from homology"/>
<protein>
    <recommendedName>
        <fullName evidence="1">Glutamate-1-semialdehyde 2,1-aminomutase</fullName>
        <shortName evidence="1">GSA</shortName>
        <ecNumber evidence="1">5.4.3.8</ecNumber>
    </recommendedName>
    <alternativeName>
        <fullName evidence="1">Glutamate-1-semialdehyde aminotransferase</fullName>
        <shortName evidence="1">GSA-AT</shortName>
    </alternativeName>
</protein>
<feature type="chain" id="PRO_1000205645" description="Glutamate-1-semialdehyde 2,1-aminomutase">
    <location>
        <begin position="1"/>
        <end position="426"/>
    </location>
</feature>
<feature type="modified residue" description="N6-(pyridoxal phosphate)lysine" evidence="1">
    <location>
        <position position="265"/>
    </location>
</feature>
<gene>
    <name evidence="1" type="primary">hemL</name>
    <name type="ordered locus">PC1_3103</name>
</gene>
<organism>
    <name type="scientific">Pectobacterium carotovorum subsp. carotovorum (strain PC1)</name>
    <dbReference type="NCBI Taxonomy" id="561230"/>
    <lineage>
        <taxon>Bacteria</taxon>
        <taxon>Pseudomonadati</taxon>
        <taxon>Pseudomonadota</taxon>
        <taxon>Gammaproteobacteria</taxon>
        <taxon>Enterobacterales</taxon>
        <taxon>Pectobacteriaceae</taxon>
        <taxon>Pectobacterium</taxon>
    </lineage>
</organism>
<accession>C6DC32</accession>
<keyword id="KW-0963">Cytoplasm</keyword>
<keyword id="KW-0413">Isomerase</keyword>
<keyword id="KW-0627">Porphyrin biosynthesis</keyword>
<keyword id="KW-0663">Pyridoxal phosphate</keyword>
<evidence type="ECO:0000255" key="1">
    <source>
        <dbReference type="HAMAP-Rule" id="MF_00375"/>
    </source>
</evidence>
<sequence length="426" mass="45216">MNKSESLYAAAQQLIPGGVNSPVRAFNGVGGTPLFIERADGAYLYDADEQAYIDYVGSWGPMVLGHNHPAIRDAVIAAAERGLSFGAPTEMEVQMARLVTSLVPSMDMVRMVNSGTEATMSAIRLARGYTGRDKIIKFEGCYHGHADCLLVKAGSGALTLGQPNSPGVPADFARHTLTCVYNDLSSVRAAFEQYPDEIAAIIVEPVAGNMNCVPPLPDFLPGLRALCDEFGALFIIDEVMTGFRVALAGAQSHYGVVPDLTCLGKIIGGGMPVGAFGGKREVMQALAPTGPVYQAGTLSGNPIAMAAGFACLTEVAKPGVHEKLTALTNQLAEGLLAAAKAENIPLVVNQAGGMFGLFFTDAESVTCYQDVMKCDVERFKLFFHMMLEEGVYLAPSAFEAGFMSLAHTPQDIDRTIEAAQLCFSRL</sequence>
<name>GSA_PECCP</name>
<comment type="catalytic activity">
    <reaction evidence="1">
        <text>(S)-4-amino-5-oxopentanoate = 5-aminolevulinate</text>
        <dbReference type="Rhea" id="RHEA:14265"/>
        <dbReference type="ChEBI" id="CHEBI:57501"/>
        <dbReference type="ChEBI" id="CHEBI:356416"/>
        <dbReference type="EC" id="5.4.3.8"/>
    </reaction>
</comment>
<comment type="cofactor">
    <cofactor evidence="1">
        <name>pyridoxal 5'-phosphate</name>
        <dbReference type="ChEBI" id="CHEBI:597326"/>
    </cofactor>
</comment>
<comment type="pathway">
    <text evidence="1">Porphyrin-containing compound metabolism; protoporphyrin-IX biosynthesis; 5-aminolevulinate from L-glutamyl-tRNA(Glu): step 2/2.</text>
</comment>
<comment type="subunit">
    <text evidence="1">Homodimer.</text>
</comment>
<comment type="subcellular location">
    <subcellularLocation>
        <location evidence="1">Cytoplasm</location>
    </subcellularLocation>
</comment>
<comment type="similarity">
    <text evidence="1">Belongs to the class-III pyridoxal-phosphate-dependent aminotransferase family. HemL subfamily.</text>
</comment>
<dbReference type="EC" id="5.4.3.8" evidence="1"/>
<dbReference type="EMBL" id="CP001657">
    <property type="protein sequence ID" value="ACT14126.1"/>
    <property type="molecule type" value="Genomic_DNA"/>
</dbReference>
<dbReference type="RefSeq" id="WP_015841272.1">
    <property type="nucleotide sequence ID" value="NC_012917.1"/>
</dbReference>
<dbReference type="SMR" id="C6DC32"/>
<dbReference type="STRING" id="561230.PC1_3103"/>
<dbReference type="GeneID" id="67793055"/>
<dbReference type="KEGG" id="pct:PC1_3103"/>
<dbReference type="eggNOG" id="COG0001">
    <property type="taxonomic scope" value="Bacteria"/>
</dbReference>
<dbReference type="HOGENOM" id="CLU_016922_1_5_6"/>
<dbReference type="OrthoDB" id="9801052at2"/>
<dbReference type="UniPathway" id="UPA00251">
    <property type="reaction ID" value="UER00317"/>
</dbReference>
<dbReference type="Proteomes" id="UP000002736">
    <property type="component" value="Chromosome"/>
</dbReference>
<dbReference type="GO" id="GO:0005737">
    <property type="term" value="C:cytoplasm"/>
    <property type="evidence" value="ECO:0007669"/>
    <property type="project" value="UniProtKB-SubCell"/>
</dbReference>
<dbReference type="GO" id="GO:0042286">
    <property type="term" value="F:glutamate-1-semialdehyde 2,1-aminomutase activity"/>
    <property type="evidence" value="ECO:0007669"/>
    <property type="project" value="UniProtKB-UniRule"/>
</dbReference>
<dbReference type="GO" id="GO:0030170">
    <property type="term" value="F:pyridoxal phosphate binding"/>
    <property type="evidence" value="ECO:0007669"/>
    <property type="project" value="InterPro"/>
</dbReference>
<dbReference type="GO" id="GO:0008483">
    <property type="term" value="F:transaminase activity"/>
    <property type="evidence" value="ECO:0007669"/>
    <property type="project" value="InterPro"/>
</dbReference>
<dbReference type="GO" id="GO:0006782">
    <property type="term" value="P:protoporphyrinogen IX biosynthetic process"/>
    <property type="evidence" value="ECO:0007669"/>
    <property type="project" value="UniProtKB-UniRule"/>
</dbReference>
<dbReference type="CDD" id="cd00610">
    <property type="entry name" value="OAT_like"/>
    <property type="match status" value="1"/>
</dbReference>
<dbReference type="FunFam" id="3.40.640.10:FF:000021">
    <property type="entry name" value="Glutamate-1-semialdehyde 2,1-aminomutase"/>
    <property type="match status" value="1"/>
</dbReference>
<dbReference type="FunFam" id="3.90.1150.10:FF:000012">
    <property type="entry name" value="Glutamate-1-semialdehyde 2,1-aminomutase"/>
    <property type="match status" value="1"/>
</dbReference>
<dbReference type="Gene3D" id="3.90.1150.10">
    <property type="entry name" value="Aspartate Aminotransferase, domain 1"/>
    <property type="match status" value="1"/>
</dbReference>
<dbReference type="Gene3D" id="3.40.640.10">
    <property type="entry name" value="Type I PLP-dependent aspartate aminotransferase-like (Major domain)"/>
    <property type="match status" value="1"/>
</dbReference>
<dbReference type="HAMAP" id="MF_00375">
    <property type="entry name" value="HemL_aminotrans_3"/>
    <property type="match status" value="1"/>
</dbReference>
<dbReference type="InterPro" id="IPR004639">
    <property type="entry name" value="4pyrrol_synth_GluAld_NH2Trfase"/>
</dbReference>
<dbReference type="InterPro" id="IPR005814">
    <property type="entry name" value="Aminotrans_3"/>
</dbReference>
<dbReference type="InterPro" id="IPR049704">
    <property type="entry name" value="Aminotrans_3_PPA_site"/>
</dbReference>
<dbReference type="InterPro" id="IPR015424">
    <property type="entry name" value="PyrdxlP-dep_Trfase"/>
</dbReference>
<dbReference type="InterPro" id="IPR015421">
    <property type="entry name" value="PyrdxlP-dep_Trfase_major"/>
</dbReference>
<dbReference type="InterPro" id="IPR015422">
    <property type="entry name" value="PyrdxlP-dep_Trfase_small"/>
</dbReference>
<dbReference type="NCBIfam" id="TIGR00713">
    <property type="entry name" value="hemL"/>
    <property type="match status" value="1"/>
</dbReference>
<dbReference type="NCBIfam" id="NF000818">
    <property type="entry name" value="PRK00062.1"/>
    <property type="match status" value="1"/>
</dbReference>
<dbReference type="PANTHER" id="PTHR43713">
    <property type="entry name" value="GLUTAMATE-1-SEMIALDEHYDE 2,1-AMINOMUTASE"/>
    <property type="match status" value="1"/>
</dbReference>
<dbReference type="PANTHER" id="PTHR43713:SF3">
    <property type="entry name" value="GLUTAMATE-1-SEMIALDEHYDE 2,1-AMINOMUTASE 1, CHLOROPLASTIC-RELATED"/>
    <property type="match status" value="1"/>
</dbReference>
<dbReference type="Pfam" id="PF00202">
    <property type="entry name" value="Aminotran_3"/>
    <property type="match status" value="1"/>
</dbReference>
<dbReference type="SUPFAM" id="SSF53383">
    <property type="entry name" value="PLP-dependent transferases"/>
    <property type="match status" value="1"/>
</dbReference>
<dbReference type="PROSITE" id="PS00600">
    <property type="entry name" value="AA_TRANSFER_CLASS_3"/>
    <property type="match status" value="1"/>
</dbReference>